<name>QUEA_LYSSC</name>
<feature type="chain" id="PRO_1000094787" description="S-adenosylmethionine:tRNA ribosyltransferase-isomerase">
    <location>
        <begin position="1"/>
        <end position="346"/>
    </location>
</feature>
<comment type="function">
    <text evidence="1">Transfers and isomerizes the ribose moiety from AdoMet to the 7-aminomethyl group of 7-deazaguanine (preQ1-tRNA) to give epoxyqueuosine (oQ-tRNA).</text>
</comment>
<comment type="catalytic activity">
    <reaction evidence="1">
        <text>7-aminomethyl-7-carbaguanosine(34) in tRNA + S-adenosyl-L-methionine = epoxyqueuosine(34) in tRNA + adenine + L-methionine + 2 H(+)</text>
        <dbReference type="Rhea" id="RHEA:32155"/>
        <dbReference type="Rhea" id="RHEA-COMP:10342"/>
        <dbReference type="Rhea" id="RHEA-COMP:18582"/>
        <dbReference type="ChEBI" id="CHEBI:15378"/>
        <dbReference type="ChEBI" id="CHEBI:16708"/>
        <dbReference type="ChEBI" id="CHEBI:57844"/>
        <dbReference type="ChEBI" id="CHEBI:59789"/>
        <dbReference type="ChEBI" id="CHEBI:82833"/>
        <dbReference type="ChEBI" id="CHEBI:194443"/>
        <dbReference type="EC" id="2.4.99.17"/>
    </reaction>
</comment>
<comment type="pathway">
    <text evidence="1">tRNA modification; tRNA-queuosine biosynthesis.</text>
</comment>
<comment type="subunit">
    <text evidence="1">Monomer.</text>
</comment>
<comment type="subcellular location">
    <subcellularLocation>
        <location evidence="1">Cytoplasm</location>
    </subcellularLocation>
</comment>
<comment type="similarity">
    <text evidence="1">Belongs to the QueA family.</text>
</comment>
<keyword id="KW-0963">Cytoplasm</keyword>
<keyword id="KW-0671">Queuosine biosynthesis</keyword>
<keyword id="KW-0949">S-adenosyl-L-methionine</keyword>
<keyword id="KW-0808">Transferase</keyword>
<proteinExistence type="inferred from homology"/>
<accession>B1HVA2</accession>
<dbReference type="EC" id="2.4.99.17" evidence="1"/>
<dbReference type="EMBL" id="CP000817">
    <property type="protein sequence ID" value="ACA41404.1"/>
    <property type="molecule type" value="Genomic_DNA"/>
</dbReference>
<dbReference type="RefSeq" id="WP_012295449.1">
    <property type="nucleotide sequence ID" value="NC_010382.1"/>
</dbReference>
<dbReference type="SMR" id="B1HVA2"/>
<dbReference type="EnsemblBacteria" id="ACA41404">
    <property type="protein sequence ID" value="ACA41404"/>
    <property type="gene ID" value="Bsph_3934"/>
</dbReference>
<dbReference type="KEGG" id="lsp:Bsph_3934"/>
<dbReference type="HOGENOM" id="CLU_039110_1_0_9"/>
<dbReference type="UniPathway" id="UPA00392"/>
<dbReference type="Proteomes" id="UP000002164">
    <property type="component" value="Chromosome"/>
</dbReference>
<dbReference type="GO" id="GO:0005737">
    <property type="term" value="C:cytoplasm"/>
    <property type="evidence" value="ECO:0007669"/>
    <property type="project" value="UniProtKB-SubCell"/>
</dbReference>
<dbReference type="GO" id="GO:0051075">
    <property type="term" value="F:S-adenosylmethionine:tRNA ribosyltransferase-isomerase activity"/>
    <property type="evidence" value="ECO:0007669"/>
    <property type="project" value="UniProtKB-EC"/>
</dbReference>
<dbReference type="GO" id="GO:0008616">
    <property type="term" value="P:queuosine biosynthetic process"/>
    <property type="evidence" value="ECO:0007669"/>
    <property type="project" value="UniProtKB-UniRule"/>
</dbReference>
<dbReference type="GO" id="GO:0002099">
    <property type="term" value="P:tRNA wobble guanine modification"/>
    <property type="evidence" value="ECO:0007669"/>
    <property type="project" value="TreeGrafter"/>
</dbReference>
<dbReference type="FunFam" id="2.40.10.240:FF:000002">
    <property type="entry name" value="S-adenosylmethionine:tRNA ribosyltransferase-isomerase"/>
    <property type="match status" value="1"/>
</dbReference>
<dbReference type="FunFam" id="3.40.1780.10:FF:000001">
    <property type="entry name" value="S-adenosylmethionine:tRNA ribosyltransferase-isomerase"/>
    <property type="match status" value="1"/>
</dbReference>
<dbReference type="Gene3D" id="2.40.10.240">
    <property type="entry name" value="QueA-like"/>
    <property type="match status" value="1"/>
</dbReference>
<dbReference type="Gene3D" id="3.40.1780.10">
    <property type="entry name" value="QueA-like"/>
    <property type="match status" value="1"/>
</dbReference>
<dbReference type="HAMAP" id="MF_00113">
    <property type="entry name" value="QueA"/>
    <property type="match status" value="1"/>
</dbReference>
<dbReference type="InterPro" id="IPR003699">
    <property type="entry name" value="QueA"/>
</dbReference>
<dbReference type="InterPro" id="IPR042118">
    <property type="entry name" value="QueA_dom1"/>
</dbReference>
<dbReference type="InterPro" id="IPR042119">
    <property type="entry name" value="QueA_dom2"/>
</dbReference>
<dbReference type="InterPro" id="IPR036100">
    <property type="entry name" value="QueA_sf"/>
</dbReference>
<dbReference type="NCBIfam" id="NF001140">
    <property type="entry name" value="PRK00147.1"/>
    <property type="match status" value="1"/>
</dbReference>
<dbReference type="NCBIfam" id="TIGR00113">
    <property type="entry name" value="queA"/>
    <property type="match status" value="1"/>
</dbReference>
<dbReference type="PANTHER" id="PTHR30307">
    <property type="entry name" value="S-ADENOSYLMETHIONINE:TRNA RIBOSYLTRANSFERASE-ISOMERASE"/>
    <property type="match status" value="1"/>
</dbReference>
<dbReference type="PANTHER" id="PTHR30307:SF0">
    <property type="entry name" value="S-ADENOSYLMETHIONINE:TRNA RIBOSYLTRANSFERASE-ISOMERASE"/>
    <property type="match status" value="1"/>
</dbReference>
<dbReference type="Pfam" id="PF02547">
    <property type="entry name" value="Queuosine_synth"/>
    <property type="match status" value="1"/>
</dbReference>
<dbReference type="SUPFAM" id="SSF111337">
    <property type="entry name" value="QueA-like"/>
    <property type="match status" value="1"/>
</dbReference>
<gene>
    <name evidence="1" type="primary">queA</name>
    <name type="ordered locus">Bsph_3934</name>
</gene>
<evidence type="ECO:0000255" key="1">
    <source>
        <dbReference type="HAMAP-Rule" id="MF_00113"/>
    </source>
</evidence>
<reference key="1">
    <citation type="journal article" date="2008" name="J. Bacteriol.">
        <title>Complete genome sequence of the mosquitocidal bacterium Bacillus sphaericus C3-41 and comparison with those of closely related Bacillus species.</title>
        <authorList>
            <person name="Hu X."/>
            <person name="Fan W."/>
            <person name="Han B."/>
            <person name="Liu H."/>
            <person name="Zheng D."/>
            <person name="Li Q."/>
            <person name="Dong W."/>
            <person name="Yan J."/>
            <person name="Gao M."/>
            <person name="Berry C."/>
            <person name="Yuan Z."/>
        </authorList>
    </citation>
    <scope>NUCLEOTIDE SEQUENCE [LARGE SCALE GENOMIC DNA]</scope>
    <source>
        <strain>C3-41</strain>
    </source>
</reference>
<protein>
    <recommendedName>
        <fullName evidence="1">S-adenosylmethionine:tRNA ribosyltransferase-isomerase</fullName>
        <ecNumber evidence="1">2.4.99.17</ecNumber>
    </recommendedName>
    <alternativeName>
        <fullName evidence="1">Queuosine biosynthesis protein QueA</fullName>
    </alternativeName>
</protein>
<organism>
    <name type="scientific">Lysinibacillus sphaericus (strain C3-41)</name>
    <dbReference type="NCBI Taxonomy" id="444177"/>
    <lineage>
        <taxon>Bacteria</taxon>
        <taxon>Bacillati</taxon>
        <taxon>Bacillota</taxon>
        <taxon>Bacilli</taxon>
        <taxon>Bacillales</taxon>
        <taxon>Bacillaceae</taxon>
        <taxon>Lysinibacillus</taxon>
    </lineage>
</organism>
<sequence length="346" mass="38804">MRVEDFDFELPEELIAQTPLVDRTASRLMVVTPGSNEVEHQHFAHVLEELRTGDCLVLNDTRVLPARLMGVKEETGAHIEVLLLKQLPGTDEWETLVKPAKRVKVGTVITFGDGLLTATCTGELDHGGRTFEFHYDGIFFEILEQLGEMPLPPYIREKLEDKDRYQTVYAKERGSAAAPTAGLHFTEELLEQVKAKGVEVVFITLHVGLGTFRPVSVDSIENHEMHAEFYSVTEEAADTINRVKRNGGKIIAVGTTSTRTLETIGSKYDGEVRAEQGWTSIFIYPGYTFTVVDGLITNFHLPKSTLVMLVSTLATRETILSAYQQAVEEKYRFFSFGDAMFIRPKE</sequence>